<gene>
    <name evidence="1" type="primary">fabH</name>
    <name type="ordered locus">CPn_0298</name>
    <name type="ordered locus">CP_0460</name>
    <name type="ordered locus">CpB0307</name>
</gene>
<feature type="chain" id="PRO_0000110414" description="Beta-ketoacyl-[acyl-carrier-protein] synthase III">
    <location>
        <begin position="1"/>
        <end position="335"/>
    </location>
</feature>
<feature type="region of interest" description="ACP-binding" evidence="1">
    <location>
        <begin position="262"/>
        <end position="266"/>
    </location>
</feature>
<feature type="active site" evidence="1">
    <location>
        <position position="120"/>
    </location>
</feature>
<feature type="active site" evidence="1">
    <location>
        <position position="261"/>
    </location>
</feature>
<feature type="active site" evidence="1">
    <location>
        <position position="291"/>
    </location>
</feature>
<name>FABH_CHLPN</name>
<sequence>MWFSVNKNKKAAIWATGSYLPEKVLSNADLEKMVDTSDEWIVTRTGIKERRIAGPQEYTSLMGAIAAEKAIANAGLSKDQIDCIIFSTAAPDYIFPSSGALAQAHLGIEDVPTFDCQAACTGYLYGLSVAKAYVESGTYNHVLLIAADKLSSFVDYTDRNTCVLFGDGGAACVIGESRPGSLEINRLSLGADGKLGELLSLPAGGSRCPASKETLQSGKHFIAMEGKEVFKHAVRRMETAAKHSIALAGIQEEDIDWFVPHQANERIIDALAKRFEIDESRVFKSVHKYGNTAASSVGIALDELVHTESIKLDDYLLLVAFGGGLSWGAVVLKQV</sequence>
<protein>
    <recommendedName>
        <fullName evidence="1">Beta-ketoacyl-[acyl-carrier-protein] synthase III</fullName>
        <shortName evidence="1">Beta-ketoacyl-ACP synthase III</shortName>
        <shortName evidence="1">KAS III</shortName>
        <ecNumber evidence="1">2.3.1.180</ecNumber>
    </recommendedName>
    <alternativeName>
        <fullName evidence="1">3-oxoacyl-[acyl-carrier-protein] synthase 3</fullName>
    </alternativeName>
    <alternativeName>
        <fullName evidence="1">3-oxoacyl-[acyl-carrier-protein] synthase III</fullName>
    </alternativeName>
</protein>
<organism>
    <name type="scientific">Chlamydia pneumoniae</name>
    <name type="common">Chlamydophila pneumoniae</name>
    <dbReference type="NCBI Taxonomy" id="83558"/>
    <lineage>
        <taxon>Bacteria</taxon>
        <taxon>Pseudomonadati</taxon>
        <taxon>Chlamydiota</taxon>
        <taxon>Chlamydiia</taxon>
        <taxon>Chlamydiales</taxon>
        <taxon>Chlamydiaceae</taxon>
        <taxon>Chlamydia/Chlamydophila group</taxon>
        <taxon>Chlamydia</taxon>
    </lineage>
</organism>
<evidence type="ECO:0000255" key="1">
    <source>
        <dbReference type="HAMAP-Rule" id="MF_01815"/>
    </source>
</evidence>
<keyword id="KW-0012">Acyltransferase</keyword>
<keyword id="KW-0963">Cytoplasm</keyword>
<keyword id="KW-0275">Fatty acid biosynthesis</keyword>
<keyword id="KW-0276">Fatty acid metabolism</keyword>
<keyword id="KW-0444">Lipid biosynthesis</keyword>
<keyword id="KW-0443">Lipid metabolism</keyword>
<keyword id="KW-0511">Multifunctional enzyme</keyword>
<keyword id="KW-0808">Transferase</keyword>
<dbReference type="EC" id="2.3.1.180" evidence="1"/>
<dbReference type="EMBL" id="AE001363">
    <property type="protein sequence ID" value="AAD18447.1"/>
    <property type="molecule type" value="Genomic_DNA"/>
</dbReference>
<dbReference type="EMBL" id="AE002161">
    <property type="protein sequence ID" value="AAF38297.1"/>
    <property type="molecule type" value="Genomic_DNA"/>
</dbReference>
<dbReference type="EMBL" id="BA000008">
    <property type="protein sequence ID" value="BAA98508.1"/>
    <property type="molecule type" value="Genomic_DNA"/>
</dbReference>
<dbReference type="EMBL" id="AE009440">
    <property type="protein sequence ID" value="AAP98240.1"/>
    <property type="molecule type" value="Genomic_DNA"/>
</dbReference>
<dbReference type="PIR" id="B86528">
    <property type="entry name" value="B86528"/>
</dbReference>
<dbReference type="PIR" id="F72096">
    <property type="entry name" value="F72096"/>
</dbReference>
<dbReference type="RefSeq" id="NP_224503.1">
    <property type="nucleotide sequence ID" value="NC_000922.1"/>
</dbReference>
<dbReference type="RefSeq" id="WP_010882946.1">
    <property type="nucleotide sequence ID" value="NZ_LN847257.1"/>
</dbReference>
<dbReference type="SMR" id="Q9Z8P0"/>
<dbReference type="STRING" id="406984.CPK_ORF00806"/>
<dbReference type="GeneID" id="45050347"/>
<dbReference type="KEGG" id="cpa:CP_0460"/>
<dbReference type="KEGG" id="cpj:fabH"/>
<dbReference type="KEGG" id="cpn:CPn_0298"/>
<dbReference type="KEGG" id="cpt:CpB0307"/>
<dbReference type="PATRIC" id="fig|115713.3.peg.332"/>
<dbReference type="eggNOG" id="COG0332">
    <property type="taxonomic scope" value="Bacteria"/>
</dbReference>
<dbReference type="HOGENOM" id="CLU_039592_3_1_0"/>
<dbReference type="OMA" id="WGSEGDK"/>
<dbReference type="OrthoDB" id="9815506at2"/>
<dbReference type="UniPathway" id="UPA00094"/>
<dbReference type="Proteomes" id="UP000000583">
    <property type="component" value="Chromosome"/>
</dbReference>
<dbReference type="Proteomes" id="UP000000801">
    <property type="component" value="Chromosome"/>
</dbReference>
<dbReference type="GO" id="GO:0005737">
    <property type="term" value="C:cytoplasm"/>
    <property type="evidence" value="ECO:0007669"/>
    <property type="project" value="UniProtKB-SubCell"/>
</dbReference>
<dbReference type="GO" id="GO:0004315">
    <property type="term" value="F:3-oxoacyl-[acyl-carrier-protein] synthase activity"/>
    <property type="evidence" value="ECO:0007669"/>
    <property type="project" value="InterPro"/>
</dbReference>
<dbReference type="GO" id="GO:0033818">
    <property type="term" value="F:beta-ketoacyl-acyl-carrier-protein synthase III activity"/>
    <property type="evidence" value="ECO:0007669"/>
    <property type="project" value="UniProtKB-UniRule"/>
</dbReference>
<dbReference type="GO" id="GO:0006633">
    <property type="term" value="P:fatty acid biosynthetic process"/>
    <property type="evidence" value="ECO:0007669"/>
    <property type="project" value="UniProtKB-UniRule"/>
</dbReference>
<dbReference type="GO" id="GO:0044550">
    <property type="term" value="P:secondary metabolite biosynthetic process"/>
    <property type="evidence" value="ECO:0007669"/>
    <property type="project" value="TreeGrafter"/>
</dbReference>
<dbReference type="CDD" id="cd00830">
    <property type="entry name" value="KAS_III"/>
    <property type="match status" value="1"/>
</dbReference>
<dbReference type="FunFam" id="3.40.47.10:FF:000004">
    <property type="entry name" value="3-oxoacyl-[acyl-carrier-protein] synthase 3"/>
    <property type="match status" value="1"/>
</dbReference>
<dbReference type="Gene3D" id="3.40.47.10">
    <property type="match status" value="1"/>
</dbReference>
<dbReference type="HAMAP" id="MF_01815">
    <property type="entry name" value="FabH"/>
    <property type="match status" value="1"/>
</dbReference>
<dbReference type="InterPro" id="IPR013747">
    <property type="entry name" value="ACP_syn_III_C"/>
</dbReference>
<dbReference type="InterPro" id="IPR013751">
    <property type="entry name" value="ACP_syn_III_N"/>
</dbReference>
<dbReference type="InterPro" id="IPR004655">
    <property type="entry name" value="FabH"/>
</dbReference>
<dbReference type="InterPro" id="IPR016039">
    <property type="entry name" value="Thiolase-like"/>
</dbReference>
<dbReference type="NCBIfam" id="TIGR00747">
    <property type="entry name" value="fabH"/>
    <property type="match status" value="1"/>
</dbReference>
<dbReference type="NCBIfam" id="NF006829">
    <property type="entry name" value="PRK09352.1"/>
    <property type="match status" value="1"/>
</dbReference>
<dbReference type="PANTHER" id="PTHR34069">
    <property type="entry name" value="3-OXOACYL-[ACYL-CARRIER-PROTEIN] SYNTHASE 3"/>
    <property type="match status" value="1"/>
</dbReference>
<dbReference type="PANTHER" id="PTHR34069:SF2">
    <property type="entry name" value="BETA-KETOACYL-[ACYL-CARRIER-PROTEIN] SYNTHASE III"/>
    <property type="match status" value="1"/>
</dbReference>
<dbReference type="Pfam" id="PF08545">
    <property type="entry name" value="ACP_syn_III"/>
    <property type="match status" value="1"/>
</dbReference>
<dbReference type="Pfam" id="PF08541">
    <property type="entry name" value="ACP_syn_III_C"/>
    <property type="match status" value="1"/>
</dbReference>
<dbReference type="SUPFAM" id="SSF53901">
    <property type="entry name" value="Thiolase-like"/>
    <property type="match status" value="1"/>
</dbReference>
<comment type="function">
    <text evidence="1">Catalyzes the condensation reaction of fatty acid synthesis by the addition to an acyl acceptor of two carbons from malonyl-ACP. Catalyzes the first condensation reaction which initiates fatty acid synthesis and may therefore play a role in governing the total rate of fatty acid production. Possesses both acetoacetyl-ACP synthase and acetyl transacylase activities. Its substrate specificity determines the biosynthesis of branched-chain and/or straight-chain of fatty acids.</text>
</comment>
<comment type="catalytic activity">
    <reaction evidence="1">
        <text>malonyl-[ACP] + acetyl-CoA + H(+) = 3-oxobutanoyl-[ACP] + CO2 + CoA</text>
        <dbReference type="Rhea" id="RHEA:12080"/>
        <dbReference type="Rhea" id="RHEA-COMP:9623"/>
        <dbReference type="Rhea" id="RHEA-COMP:9625"/>
        <dbReference type="ChEBI" id="CHEBI:15378"/>
        <dbReference type="ChEBI" id="CHEBI:16526"/>
        <dbReference type="ChEBI" id="CHEBI:57287"/>
        <dbReference type="ChEBI" id="CHEBI:57288"/>
        <dbReference type="ChEBI" id="CHEBI:78449"/>
        <dbReference type="ChEBI" id="CHEBI:78450"/>
        <dbReference type="EC" id="2.3.1.180"/>
    </reaction>
</comment>
<comment type="pathway">
    <text evidence="1">Lipid metabolism; fatty acid biosynthesis.</text>
</comment>
<comment type="subunit">
    <text evidence="1">Homodimer.</text>
</comment>
<comment type="subcellular location">
    <subcellularLocation>
        <location evidence="1">Cytoplasm</location>
    </subcellularLocation>
</comment>
<comment type="domain">
    <text evidence="1">The last Arg residue of the ACP-binding site is essential for the weak association between ACP/AcpP and FabH.</text>
</comment>
<comment type="similarity">
    <text evidence="1">Belongs to the thiolase-like superfamily. FabH family.</text>
</comment>
<reference key="1">
    <citation type="journal article" date="1999" name="Nat. Genet.">
        <title>Comparative genomes of Chlamydia pneumoniae and C. trachomatis.</title>
        <authorList>
            <person name="Kalman S."/>
            <person name="Mitchell W.P."/>
            <person name="Marathe R."/>
            <person name="Lammel C.J."/>
            <person name="Fan J."/>
            <person name="Hyman R.W."/>
            <person name="Olinger L."/>
            <person name="Grimwood J."/>
            <person name="Davis R.W."/>
            <person name="Stephens R.S."/>
        </authorList>
    </citation>
    <scope>NUCLEOTIDE SEQUENCE [LARGE SCALE GENOMIC DNA]</scope>
    <source>
        <strain>CWL029</strain>
    </source>
</reference>
<reference key="2">
    <citation type="journal article" date="2000" name="Nucleic Acids Res.">
        <title>Genome sequences of Chlamydia trachomatis MoPn and Chlamydia pneumoniae AR39.</title>
        <authorList>
            <person name="Read T.D."/>
            <person name="Brunham R.C."/>
            <person name="Shen C."/>
            <person name="Gill S.R."/>
            <person name="Heidelberg J.F."/>
            <person name="White O."/>
            <person name="Hickey E.K."/>
            <person name="Peterson J.D."/>
            <person name="Utterback T.R."/>
            <person name="Berry K.J."/>
            <person name="Bass S."/>
            <person name="Linher K.D."/>
            <person name="Weidman J.F."/>
            <person name="Khouri H.M."/>
            <person name="Craven B."/>
            <person name="Bowman C."/>
            <person name="Dodson R.J."/>
            <person name="Gwinn M.L."/>
            <person name="Nelson W.C."/>
            <person name="DeBoy R.T."/>
            <person name="Kolonay J.F."/>
            <person name="McClarty G."/>
            <person name="Salzberg S.L."/>
            <person name="Eisen J.A."/>
            <person name="Fraser C.M."/>
        </authorList>
    </citation>
    <scope>NUCLEOTIDE SEQUENCE [LARGE SCALE GENOMIC DNA]</scope>
    <source>
        <strain>AR39</strain>
    </source>
</reference>
<reference key="3">
    <citation type="journal article" date="2000" name="Nucleic Acids Res.">
        <title>Comparison of whole genome sequences of Chlamydia pneumoniae J138 from Japan and CWL029 from USA.</title>
        <authorList>
            <person name="Shirai M."/>
            <person name="Hirakawa H."/>
            <person name="Kimoto M."/>
            <person name="Tabuchi M."/>
            <person name="Kishi F."/>
            <person name="Ouchi K."/>
            <person name="Shiba T."/>
            <person name="Ishii K."/>
            <person name="Hattori M."/>
            <person name="Kuhara S."/>
            <person name="Nakazawa T."/>
        </authorList>
    </citation>
    <scope>NUCLEOTIDE SEQUENCE [LARGE SCALE GENOMIC DNA]</scope>
    <source>
        <strain>J138</strain>
    </source>
</reference>
<reference key="4">
    <citation type="submission" date="2002-05" db="EMBL/GenBank/DDBJ databases">
        <title>The genome sequence of Chlamydia pneumoniae TW183 and comparison with other Chlamydia strains based on whole genome sequence analysis.</title>
        <authorList>
            <person name="Geng M.M."/>
            <person name="Schuhmacher A."/>
            <person name="Muehldorfer I."/>
            <person name="Bensch K.W."/>
            <person name="Schaefer K.P."/>
            <person name="Schneider S."/>
            <person name="Pohl T."/>
            <person name="Essig A."/>
            <person name="Marre R."/>
            <person name="Melchers K."/>
        </authorList>
    </citation>
    <scope>NUCLEOTIDE SEQUENCE [LARGE SCALE GENOMIC DNA]</scope>
    <source>
        <strain>TW-183</strain>
    </source>
</reference>
<accession>Q9Z8P0</accession>
<accession>Q9JQ91</accession>
<proteinExistence type="inferred from homology"/>